<name>NANE_BORGP</name>
<sequence length="232" mass="25685">MIIIEKIKRGLIVSCQALENEPLHSSFIMSKMALAAKMGGAIGIRANGVNDISQIKLEVDLPIIGIIKRNYNNCDVFITPTMKEIDELCNEGVDIIALDATFRNRPDGVLLDDFFESIKKKYPKQCLMADISSLDEAINADKLGFDFIGTTLYGYTKSTNGLDIADNDFNFLKALINSNFKSTLIVEGKIDTPLKAQKCFEMGVDLVVVGGAITRPVEITKKFVEKINQVKR</sequence>
<keyword id="KW-0119">Carbohydrate metabolism</keyword>
<keyword id="KW-0413">Isomerase</keyword>
<protein>
    <recommendedName>
        <fullName evidence="1">Putative N-acetylmannosamine-6-phosphate 2-epimerase</fullName>
        <ecNumber evidence="1">5.1.3.9</ecNumber>
    </recommendedName>
    <alternativeName>
        <fullName evidence="1">ManNAc-6-P epimerase</fullName>
    </alternativeName>
</protein>
<accession>Q660M6</accession>
<proteinExistence type="inferred from homology"/>
<gene>
    <name evidence="1" type="primary">nanE</name>
    <name type="ordered locus">BG0667</name>
</gene>
<evidence type="ECO:0000255" key="1">
    <source>
        <dbReference type="HAMAP-Rule" id="MF_01235"/>
    </source>
</evidence>
<reference key="1">
    <citation type="journal article" date="2004" name="Nucleic Acids Res.">
        <title>Comparative analysis of the Borrelia garinii genome.</title>
        <authorList>
            <person name="Gloeckner G."/>
            <person name="Lehmann R."/>
            <person name="Romualdi A."/>
            <person name="Pradella S."/>
            <person name="Schulte-Spechtel U."/>
            <person name="Schilhabel M."/>
            <person name="Wilske B."/>
            <person name="Suehnel J."/>
            <person name="Platzer M."/>
        </authorList>
    </citation>
    <scope>NUCLEOTIDE SEQUENCE [LARGE SCALE GENOMIC DNA]</scope>
    <source>
        <strain>ATCC BAA-2496 / DSM 23469 / PBi</strain>
    </source>
</reference>
<feature type="chain" id="PRO_0000179767" description="Putative N-acetylmannosamine-6-phosphate 2-epimerase">
    <location>
        <begin position="1"/>
        <end position="232"/>
    </location>
</feature>
<comment type="function">
    <text evidence="1">Converts N-acetylmannosamine-6-phosphate (ManNAc-6-P) to N-acetylglucosamine-6-phosphate (GlcNAc-6-P).</text>
</comment>
<comment type="catalytic activity">
    <reaction evidence="1">
        <text>an N-acyl-D-glucosamine 6-phosphate = an N-acyl-D-mannosamine 6-phosphate</text>
        <dbReference type="Rhea" id="RHEA:23932"/>
        <dbReference type="ChEBI" id="CHEBI:57599"/>
        <dbReference type="ChEBI" id="CHEBI:57666"/>
        <dbReference type="EC" id="5.1.3.9"/>
    </reaction>
</comment>
<comment type="pathway">
    <text evidence="1">Amino-sugar metabolism; N-acetylneuraminate degradation; D-fructose 6-phosphate from N-acetylneuraminate: step 3/5.</text>
</comment>
<comment type="similarity">
    <text evidence="1">Belongs to the NanE family.</text>
</comment>
<dbReference type="EC" id="5.1.3.9" evidence="1"/>
<dbReference type="EMBL" id="CP000013">
    <property type="protein sequence ID" value="AAU07495.1"/>
    <property type="molecule type" value="Genomic_DNA"/>
</dbReference>
<dbReference type="RefSeq" id="WP_011193950.1">
    <property type="nucleotide sequence ID" value="NZ_CP028872.1"/>
</dbReference>
<dbReference type="SMR" id="Q660M6"/>
<dbReference type="GeneID" id="45161442"/>
<dbReference type="KEGG" id="bga:BG0667"/>
<dbReference type="eggNOG" id="COG3010">
    <property type="taxonomic scope" value="Bacteria"/>
</dbReference>
<dbReference type="HOGENOM" id="CLU_086300_1_0_12"/>
<dbReference type="OrthoDB" id="9781704at2"/>
<dbReference type="UniPathway" id="UPA00629">
    <property type="reaction ID" value="UER00682"/>
</dbReference>
<dbReference type="Proteomes" id="UP000002276">
    <property type="component" value="Chromosome"/>
</dbReference>
<dbReference type="GO" id="GO:0005829">
    <property type="term" value="C:cytosol"/>
    <property type="evidence" value="ECO:0007669"/>
    <property type="project" value="TreeGrafter"/>
</dbReference>
<dbReference type="GO" id="GO:0047465">
    <property type="term" value="F:N-acylglucosamine-6-phosphate 2-epimerase activity"/>
    <property type="evidence" value="ECO:0007669"/>
    <property type="project" value="UniProtKB-EC"/>
</dbReference>
<dbReference type="GO" id="GO:0005975">
    <property type="term" value="P:carbohydrate metabolic process"/>
    <property type="evidence" value="ECO:0007669"/>
    <property type="project" value="UniProtKB-UniRule"/>
</dbReference>
<dbReference type="GO" id="GO:0006053">
    <property type="term" value="P:N-acetylmannosamine catabolic process"/>
    <property type="evidence" value="ECO:0007669"/>
    <property type="project" value="TreeGrafter"/>
</dbReference>
<dbReference type="GO" id="GO:0019262">
    <property type="term" value="P:N-acetylneuraminate catabolic process"/>
    <property type="evidence" value="ECO:0007669"/>
    <property type="project" value="UniProtKB-UniRule"/>
</dbReference>
<dbReference type="CDD" id="cd04729">
    <property type="entry name" value="NanE"/>
    <property type="match status" value="1"/>
</dbReference>
<dbReference type="FunFam" id="3.20.20.70:FF:000035">
    <property type="entry name" value="Putative N-acetylmannosamine-6-phosphate 2-epimerase"/>
    <property type="match status" value="1"/>
</dbReference>
<dbReference type="Gene3D" id="3.20.20.70">
    <property type="entry name" value="Aldolase class I"/>
    <property type="match status" value="1"/>
</dbReference>
<dbReference type="HAMAP" id="MF_01235">
    <property type="entry name" value="ManNAc6P_epimer"/>
    <property type="match status" value="1"/>
</dbReference>
<dbReference type="InterPro" id="IPR013785">
    <property type="entry name" value="Aldolase_TIM"/>
</dbReference>
<dbReference type="InterPro" id="IPR007260">
    <property type="entry name" value="NanE"/>
</dbReference>
<dbReference type="InterPro" id="IPR011060">
    <property type="entry name" value="RibuloseP-bd_barrel"/>
</dbReference>
<dbReference type="NCBIfam" id="NF002231">
    <property type="entry name" value="PRK01130.1"/>
    <property type="match status" value="1"/>
</dbReference>
<dbReference type="PANTHER" id="PTHR36204">
    <property type="entry name" value="N-ACETYLMANNOSAMINE-6-PHOSPHATE 2-EPIMERASE-RELATED"/>
    <property type="match status" value="1"/>
</dbReference>
<dbReference type="PANTHER" id="PTHR36204:SF1">
    <property type="entry name" value="N-ACETYLMANNOSAMINE-6-PHOSPHATE 2-EPIMERASE-RELATED"/>
    <property type="match status" value="1"/>
</dbReference>
<dbReference type="Pfam" id="PF04131">
    <property type="entry name" value="NanE"/>
    <property type="match status" value="1"/>
</dbReference>
<dbReference type="SUPFAM" id="SSF51366">
    <property type="entry name" value="Ribulose-phoshate binding barrel"/>
    <property type="match status" value="1"/>
</dbReference>
<organism>
    <name type="scientific">Borrelia garinii subsp. bavariensis (strain ATCC BAA-2496 / DSM 23469 / PBi)</name>
    <name type="common">Borreliella bavariensis</name>
    <dbReference type="NCBI Taxonomy" id="290434"/>
    <lineage>
        <taxon>Bacteria</taxon>
        <taxon>Pseudomonadati</taxon>
        <taxon>Spirochaetota</taxon>
        <taxon>Spirochaetia</taxon>
        <taxon>Spirochaetales</taxon>
        <taxon>Borreliaceae</taxon>
        <taxon>Borreliella</taxon>
    </lineage>
</organism>